<accession>Q2TXB8</accession>
<feature type="chain" id="PRO_0000246225" description="GPI mannosyltransferase 1">
    <location>
        <begin position="1"/>
        <end position="415"/>
    </location>
</feature>
<feature type="transmembrane region" description="Helical" evidence="2">
    <location>
        <begin position="8"/>
        <end position="28"/>
    </location>
</feature>
<feature type="transmembrane region" description="Helical" evidence="2">
    <location>
        <begin position="82"/>
        <end position="102"/>
    </location>
</feature>
<feature type="transmembrane region" description="Helical" evidence="2">
    <location>
        <begin position="134"/>
        <end position="154"/>
    </location>
</feature>
<feature type="transmembrane region" description="Helical" evidence="2">
    <location>
        <begin position="158"/>
        <end position="178"/>
    </location>
</feature>
<feature type="transmembrane region" description="Helical" evidence="2">
    <location>
        <begin position="222"/>
        <end position="242"/>
    </location>
</feature>
<feature type="transmembrane region" description="Helical" evidence="2">
    <location>
        <begin position="284"/>
        <end position="304"/>
    </location>
</feature>
<feature type="transmembrane region" description="Helical" evidence="2">
    <location>
        <begin position="329"/>
        <end position="349"/>
    </location>
</feature>
<feature type="transmembrane region" description="Helical" evidence="2">
    <location>
        <begin position="354"/>
        <end position="374"/>
    </location>
</feature>
<feature type="transmembrane region" description="Helical" evidence="2">
    <location>
        <begin position="387"/>
        <end position="407"/>
    </location>
</feature>
<evidence type="ECO:0000250" key="1"/>
<evidence type="ECO:0000255" key="2"/>
<evidence type="ECO:0000305" key="3"/>
<name>GPI14_ASPOR</name>
<proteinExistence type="inferred from homology"/>
<reference key="1">
    <citation type="journal article" date="2005" name="Nature">
        <title>Genome sequencing and analysis of Aspergillus oryzae.</title>
        <authorList>
            <person name="Machida M."/>
            <person name="Asai K."/>
            <person name="Sano M."/>
            <person name="Tanaka T."/>
            <person name="Kumagai T."/>
            <person name="Terai G."/>
            <person name="Kusumoto K."/>
            <person name="Arima T."/>
            <person name="Akita O."/>
            <person name="Kashiwagi Y."/>
            <person name="Abe K."/>
            <person name="Gomi K."/>
            <person name="Horiuchi H."/>
            <person name="Kitamoto K."/>
            <person name="Kobayashi T."/>
            <person name="Takeuchi M."/>
            <person name="Denning D.W."/>
            <person name="Galagan J.E."/>
            <person name="Nierman W.C."/>
            <person name="Yu J."/>
            <person name="Archer D.B."/>
            <person name="Bennett J.W."/>
            <person name="Bhatnagar D."/>
            <person name="Cleveland T.E."/>
            <person name="Fedorova N.D."/>
            <person name="Gotoh O."/>
            <person name="Horikawa H."/>
            <person name="Hosoyama A."/>
            <person name="Ichinomiya M."/>
            <person name="Igarashi R."/>
            <person name="Iwashita K."/>
            <person name="Juvvadi P.R."/>
            <person name="Kato M."/>
            <person name="Kato Y."/>
            <person name="Kin T."/>
            <person name="Kokubun A."/>
            <person name="Maeda H."/>
            <person name="Maeyama N."/>
            <person name="Maruyama J."/>
            <person name="Nagasaki H."/>
            <person name="Nakajima T."/>
            <person name="Oda K."/>
            <person name="Okada K."/>
            <person name="Paulsen I."/>
            <person name="Sakamoto K."/>
            <person name="Sawano T."/>
            <person name="Takahashi M."/>
            <person name="Takase K."/>
            <person name="Terabayashi Y."/>
            <person name="Wortman J.R."/>
            <person name="Yamada O."/>
            <person name="Yamagata Y."/>
            <person name="Anazawa H."/>
            <person name="Hata Y."/>
            <person name="Koide Y."/>
            <person name="Komori T."/>
            <person name="Koyama Y."/>
            <person name="Minetoki T."/>
            <person name="Suharnan S."/>
            <person name="Tanaka A."/>
            <person name="Isono K."/>
            <person name="Kuhara S."/>
            <person name="Ogasawara N."/>
            <person name="Kikuchi H."/>
        </authorList>
    </citation>
    <scope>NUCLEOTIDE SEQUENCE [LARGE SCALE GENOMIC DNA]</scope>
    <source>
        <strain>ATCC 42149 / RIB 40</strain>
    </source>
</reference>
<comment type="function">
    <text evidence="1">Mannosyltransferase involved in glycosylphosphatidylinositol-anchor biosynthesis. Transfers the first alpha-1,4-mannose to GlcN-acyl-PI during GPI precursor assembly. Required for cell wall integrity (By similarity).</text>
</comment>
<comment type="pathway">
    <text>Glycolipid biosynthesis; glycosylphosphatidylinositol-anchor biosynthesis.</text>
</comment>
<comment type="subcellular location">
    <subcellularLocation>
        <location evidence="1">Endoplasmic reticulum membrane</location>
        <topology evidence="1">Multi-pass membrane protein</topology>
    </subcellularLocation>
</comment>
<comment type="similarity">
    <text evidence="3">Belongs to the PIGM family.</text>
</comment>
<comment type="sequence caution" evidence="3">
    <conflict type="erroneous gene model prediction">
        <sequence resource="EMBL-CDS" id="BAE66105"/>
    </conflict>
</comment>
<keyword id="KW-0961">Cell wall biogenesis/degradation</keyword>
<keyword id="KW-0256">Endoplasmic reticulum</keyword>
<keyword id="KW-0328">Glycosyltransferase</keyword>
<keyword id="KW-0337">GPI-anchor biosynthesis</keyword>
<keyword id="KW-0472">Membrane</keyword>
<keyword id="KW-1185">Reference proteome</keyword>
<keyword id="KW-0808">Transferase</keyword>
<keyword id="KW-0812">Transmembrane</keyword>
<keyword id="KW-1133">Transmembrane helix</keyword>
<protein>
    <recommendedName>
        <fullName>GPI mannosyltransferase 1</fullName>
        <ecNumber>2.4.1.-</ecNumber>
    </recommendedName>
    <alternativeName>
        <fullName>GPI mannosyltransferase I</fullName>
        <shortName>GPI-MT-I</shortName>
    </alternativeName>
    <alternativeName>
        <fullName>Glycosylphosphatidylinositol-anchor biosynthesis protein 14</fullName>
    </alternativeName>
</protein>
<dbReference type="EC" id="2.4.1.-"/>
<dbReference type="EMBL" id="BA000056">
    <property type="protein sequence ID" value="BAE66105.1"/>
    <property type="status" value="ALT_SEQ"/>
    <property type="molecule type" value="Genomic_DNA"/>
</dbReference>
<dbReference type="RefSeq" id="XP_001827238.2">
    <property type="nucleotide sequence ID" value="XM_001827186.2"/>
</dbReference>
<dbReference type="SMR" id="Q2TXB8"/>
<dbReference type="STRING" id="510516.Q2TXB8"/>
<dbReference type="CAZy" id="GT50">
    <property type="family name" value="Glycosyltransferase Family 50"/>
</dbReference>
<dbReference type="EnsemblFungi" id="BAE66105">
    <property type="protein sequence ID" value="BAE66105"/>
    <property type="gene ID" value="AO090010000207"/>
</dbReference>
<dbReference type="VEuPathDB" id="FungiDB:AO090010000207"/>
<dbReference type="UniPathway" id="UPA00196"/>
<dbReference type="Proteomes" id="UP000006564">
    <property type="component" value="Chromosome 8"/>
</dbReference>
<dbReference type="GO" id="GO:0005789">
    <property type="term" value="C:endoplasmic reticulum membrane"/>
    <property type="evidence" value="ECO:0007669"/>
    <property type="project" value="UniProtKB-SubCell"/>
</dbReference>
<dbReference type="GO" id="GO:1990529">
    <property type="term" value="C:glycosylphosphatidylinositol-mannosyltransferase I complex"/>
    <property type="evidence" value="ECO:0007669"/>
    <property type="project" value="TreeGrafter"/>
</dbReference>
<dbReference type="GO" id="GO:0051751">
    <property type="term" value="F:alpha-1,4-mannosyltransferase activity"/>
    <property type="evidence" value="ECO:0007669"/>
    <property type="project" value="InterPro"/>
</dbReference>
<dbReference type="GO" id="GO:0004376">
    <property type="term" value="F:glycolipid mannosyltransferase activity"/>
    <property type="evidence" value="ECO:0007669"/>
    <property type="project" value="InterPro"/>
</dbReference>
<dbReference type="GO" id="GO:0071555">
    <property type="term" value="P:cell wall organization"/>
    <property type="evidence" value="ECO:0007669"/>
    <property type="project" value="UniProtKB-KW"/>
</dbReference>
<dbReference type="GO" id="GO:0006506">
    <property type="term" value="P:GPI anchor biosynthetic process"/>
    <property type="evidence" value="ECO:0007669"/>
    <property type="project" value="UniProtKB-UniPathway"/>
</dbReference>
<dbReference type="InterPro" id="IPR007704">
    <property type="entry name" value="PIG-M"/>
</dbReference>
<dbReference type="PANTHER" id="PTHR12886:SF0">
    <property type="entry name" value="GPI MANNOSYLTRANSFERASE 1"/>
    <property type="match status" value="1"/>
</dbReference>
<dbReference type="PANTHER" id="PTHR12886">
    <property type="entry name" value="PIG-M MANNOSYLTRANSFERASE"/>
    <property type="match status" value="1"/>
</dbReference>
<dbReference type="Pfam" id="PF05007">
    <property type="entry name" value="Mannosyl_trans"/>
    <property type="match status" value="1"/>
</dbReference>
<gene>
    <name type="primary">gpi14</name>
    <name type="ORF">AO090010000207</name>
</gene>
<sequence length="415" mass="46549">MASLFERPSLVFGAAIVLRAILLVYGAWQDAHSAVKYTDIDYMVFTDAARYVSKGDSPYARDTYRYTPLLAWLLLPTSWDGFFSFGKVLFALSDVVAGWLIAKALTSFYGMSPPRALKYASVWLLNPMVANISTRGSSEGLLCVLVIALLWAVLNRKITLAGVLLGLSVHFKIYPFVYGPSIIWWLDEEREGLKSSSQKQKPEQDDRNLLTHIFNFITPSRLLLTTTALATFSGLNISMYILYDFPFAQHTYLHHLTRIDHRHNFSPYSSLLYLSAAGDIQGSFESLAFIPQLLLSVVVIPIVLAKRSLPGAMLAQTFAFVTFNKVCTSQYFLWYLIFLPFYLPSSSLMKNPRLGITVTALWVIAQALWLQQGYYLEFLGLSSFVPGLFLASLGFFAVNIWILGIIINDVALEGC</sequence>
<organism>
    <name type="scientific">Aspergillus oryzae (strain ATCC 42149 / RIB 40)</name>
    <name type="common">Yellow koji mold</name>
    <dbReference type="NCBI Taxonomy" id="510516"/>
    <lineage>
        <taxon>Eukaryota</taxon>
        <taxon>Fungi</taxon>
        <taxon>Dikarya</taxon>
        <taxon>Ascomycota</taxon>
        <taxon>Pezizomycotina</taxon>
        <taxon>Eurotiomycetes</taxon>
        <taxon>Eurotiomycetidae</taxon>
        <taxon>Eurotiales</taxon>
        <taxon>Aspergillaceae</taxon>
        <taxon>Aspergillus</taxon>
        <taxon>Aspergillus subgen. Circumdati</taxon>
    </lineage>
</organism>